<dbReference type="EC" id="5.4.2.10" evidence="1"/>
<dbReference type="EMBL" id="CP000362">
    <property type="protein sequence ID" value="ABG31560.1"/>
    <property type="molecule type" value="Genomic_DNA"/>
</dbReference>
<dbReference type="RefSeq" id="WP_011568177.1">
    <property type="nucleotide sequence ID" value="NC_008209.1"/>
</dbReference>
<dbReference type="SMR" id="Q168N3"/>
<dbReference type="STRING" id="375451.RD1_1952"/>
<dbReference type="KEGG" id="rde:RD1_1952"/>
<dbReference type="eggNOG" id="COG1109">
    <property type="taxonomic scope" value="Bacteria"/>
</dbReference>
<dbReference type="HOGENOM" id="CLU_016950_7_0_5"/>
<dbReference type="OrthoDB" id="9803322at2"/>
<dbReference type="Proteomes" id="UP000007029">
    <property type="component" value="Chromosome"/>
</dbReference>
<dbReference type="GO" id="GO:0005829">
    <property type="term" value="C:cytosol"/>
    <property type="evidence" value="ECO:0007669"/>
    <property type="project" value="TreeGrafter"/>
</dbReference>
<dbReference type="GO" id="GO:0000287">
    <property type="term" value="F:magnesium ion binding"/>
    <property type="evidence" value="ECO:0007669"/>
    <property type="project" value="UniProtKB-UniRule"/>
</dbReference>
<dbReference type="GO" id="GO:0008966">
    <property type="term" value="F:phosphoglucosamine mutase activity"/>
    <property type="evidence" value="ECO:0007669"/>
    <property type="project" value="UniProtKB-UniRule"/>
</dbReference>
<dbReference type="GO" id="GO:0004615">
    <property type="term" value="F:phosphomannomutase activity"/>
    <property type="evidence" value="ECO:0007669"/>
    <property type="project" value="TreeGrafter"/>
</dbReference>
<dbReference type="GO" id="GO:0005975">
    <property type="term" value="P:carbohydrate metabolic process"/>
    <property type="evidence" value="ECO:0007669"/>
    <property type="project" value="InterPro"/>
</dbReference>
<dbReference type="GO" id="GO:0009252">
    <property type="term" value="P:peptidoglycan biosynthetic process"/>
    <property type="evidence" value="ECO:0007669"/>
    <property type="project" value="TreeGrafter"/>
</dbReference>
<dbReference type="GO" id="GO:0006048">
    <property type="term" value="P:UDP-N-acetylglucosamine biosynthetic process"/>
    <property type="evidence" value="ECO:0007669"/>
    <property type="project" value="TreeGrafter"/>
</dbReference>
<dbReference type="CDD" id="cd05802">
    <property type="entry name" value="GlmM"/>
    <property type="match status" value="1"/>
</dbReference>
<dbReference type="FunFam" id="3.30.310.50:FF:000001">
    <property type="entry name" value="Phosphoglucosamine mutase"/>
    <property type="match status" value="1"/>
</dbReference>
<dbReference type="FunFam" id="3.40.120.10:FF:000001">
    <property type="entry name" value="Phosphoglucosamine mutase"/>
    <property type="match status" value="1"/>
</dbReference>
<dbReference type="FunFam" id="3.40.120.10:FF:000002">
    <property type="entry name" value="Phosphoglucosamine mutase"/>
    <property type="match status" value="1"/>
</dbReference>
<dbReference type="Gene3D" id="3.40.120.10">
    <property type="entry name" value="Alpha-D-Glucose-1,6-Bisphosphate, subunit A, domain 3"/>
    <property type="match status" value="3"/>
</dbReference>
<dbReference type="Gene3D" id="3.30.310.50">
    <property type="entry name" value="Alpha-D-phosphohexomutase, C-terminal domain"/>
    <property type="match status" value="1"/>
</dbReference>
<dbReference type="HAMAP" id="MF_01554_B">
    <property type="entry name" value="GlmM_B"/>
    <property type="match status" value="1"/>
</dbReference>
<dbReference type="InterPro" id="IPR005844">
    <property type="entry name" value="A-D-PHexomutase_a/b/a-I"/>
</dbReference>
<dbReference type="InterPro" id="IPR016055">
    <property type="entry name" value="A-D-PHexomutase_a/b/a-I/II/III"/>
</dbReference>
<dbReference type="InterPro" id="IPR005845">
    <property type="entry name" value="A-D-PHexomutase_a/b/a-II"/>
</dbReference>
<dbReference type="InterPro" id="IPR005846">
    <property type="entry name" value="A-D-PHexomutase_a/b/a-III"/>
</dbReference>
<dbReference type="InterPro" id="IPR005843">
    <property type="entry name" value="A-D-PHexomutase_C"/>
</dbReference>
<dbReference type="InterPro" id="IPR036900">
    <property type="entry name" value="A-D-PHexomutase_C_sf"/>
</dbReference>
<dbReference type="InterPro" id="IPR016066">
    <property type="entry name" value="A-D-PHexomutase_CS"/>
</dbReference>
<dbReference type="InterPro" id="IPR005841">
    <property type="entry name" value="Alpha-D-phosphohexomutase_SF"/>
</dbReference>
<dbReference type="InterPro" id="IPR006352">
    <property type="entry name" value="GlmM_bact"/>
</dbReference>
<dbReference type="InterPro" id="IPR050060">
    <property type="entry name" value="Phosphoglucosamine_mutase"/>
</dbReference>
<dbReference type="NCBIfam" id="TIGR01455">
    <property type="entry name" value="glmM"/>
    <property type="match status" value="1"/>
</dbReference>
<dbReference type="NCBIfam" id="NF008139">
    <property type="entry name" value="PRK10887.1"/>
    <property type="match status" value="1"/>
</dbReference>
<dbReference type="PANTHER" id="PTHR42946:SF1">
    <property type="entry name" value="PHOSPHOGLUCOMUTASE (ALPHA-D-GLUCOSE-1,6-BISPHOSPHATE-DEPENDENT)"/>
    <property type="match status" value="1"/>
</dbReference>
<dbReference type="PANTHER" id="PTHR42946">
    <property type="entry name" value="PHOSPHOHEXOSE MUTASE"/>
    <property type="match status" value="1"/>
</dbReference>
<dbReference type="Pfam" id="PF02878">
    <property type="entry name" value="PGM_PMM_I"/>
    <property type="match status" value="1"/>
</dbReference>
<dbReference type="Pfam" id="PF02879">
    <property type="entry name" value="PGM_PMM_II"/>
    <property type="match status" value="1"/>
</dbReference>
<dbReference type="Pfam" id="PF02880">
    <property type="entry name" value="PGM_PMM_III"/>
    <property type="match status" value="1"/>
</dbReference>
<dbReference type="Pfam" id="PF00408">
    <property type="entry name" value="PGM_PMM_IV"/>
    <property type="match status" value="1"/>
</dbReference>
<dbReference type="PRINTS" id="PR00509">
    <property type="entry name" value="PGMPMM"/>
</dbReference>
<dbReference type="SUPFAM" id="SSF55957">
    <property type="entry name" value="Phosphoglucomutase, C-terminal domain"/>
    <property type="match status" value="1"/>
</dbReference>
<dbReference type="SUPFAM" id="SSF53738">
    <property type="entry name" value="Phosphoglucomutase, first 3 domains"/>
    <property type="match status" value="3"/>
</dbReference>
<dbReference type="PROSITE" id="PS00710">
    <property type="entry name" value="PGM_PMM"/>
    <property type="match status" value="1"/>
</dbReference>
<proteinExistence type="inferred from homology"/>
<organism>
    <name type="scientific">Roseobacter denitrificans (strain ATCC 33942 / OCh 114)</name>
    <name type="common">Erythrobacter sp. (strain OCh 114)</name>
    <name type="synonym">Roseobacter denitrificans</name>
    <dbReference type="NCBI Taxonomy" id="375451"/>
    <lineage>
        <taxon>Bacteria</taxon>
        <taxon>Pseudomonadati</taxon>
        <taxon>Pseudomonadota</taxon>
        <taxon>Alphaproteobacteria</taxon>
        <taxon>Rhodobacterales</taxon>
        <taxon>Roseobacteraceae</taxon>
        <taxon>Roseobacter</taxon>
    </lineage>
</organism>
<name>GLMM_ROSDO</name>
<evidence type="ECO:0000255" key="1">
    <source>
        <dbReference type="HAMAP-Rule" id="MF_01554"/>
    </source>
</evidence>
<sequence length="449" mass="47691">MDKLFGTDGVRGKANEHPMTAEMALRIGAAVGKYFRRDGSAAHRVVIGKDTRLSGYMFENALTAGLTSTGMNVLLLGPVPTPAVGLLTRSMRADLGVMISASHNPACDNGIKFFGPDGFKLSDQAEEEIEALIASGVDAVEANDIGRAKRIDDGRFRYIERLKTSFPRQRRLDGLKVVIDCANGAAHRVAPEALWELGATVIPVGVSPNGKNINEGCGSTHPQFAADTVVAHGADVGICLDGDADRVILIDETGKVGDGDQFMALMAQRWAERGKLANNALVATVMSNLGLEHFLSDLGLKLERTAVGDRYVVERMRAGGFNLGGEQSGHIVMTDYATTGDGLMAGLQFLAAMTQSEQPASVLLNRFEPVPQLLRNVRFAAGQTPLEDARVKAAIAAAEADLSGKGRLLIRKSGTEPLVRVMAEHEDQTVMEQAVDSVVEAVADAVGGT</sequence>
<accession>Q168N3</accession>
<protein>
    <recommendedName>
        <fullName evidence="1">Phosphoglucosamine mutase</fullName>
        <ecNumber evidence="1">5.4.2.10</ecNumber>
    </recommendedName>
</protein>
<reference key="1">
    <citation type="journal article" date="2007" name="J. Bacteriol.">
        <title>The complete genome sequence of Roseobacter denitrificans reveals a mixotrophic rather than photosynthetic metabolism.</title>
        <authorList>
            <person name="Swingley W.D."/>
            <person name="Sadekar S."/>
            <person name="Mastrian S.D."/>
            <person name="Matthies H.J."/>
            <person name="Hao J."/>
            <person name="Ramos H."/>
            <person name="Acharya C.R."/>
            <person name="Conrad A.L."/>
            <person name="Taylor H.L."/>
            <person name="Dejesa L.C."/>
            <person name="Shah M.K."/>
            <person name="O'Huallachain M.E."/>
            <person name="Lince M.T."/>
            <person name="Blankenship R.E."/>
            <person name="Beatty J.T."/>
            <person name="Touchman J.W."/>
        </authorList>
    </citation>
    <scope>NUCLEOTIDE SEQUENCE [LARGE SCALE GENOMIC DNA]</scope>
    <source>
        <strain>ATCC 33942 / OCh 114</strain>
    </source>
</reference>
<keyword id="KW-0413">Isomerase</keyword>
<keyword id="KW-0460">Magnesium</keyword>
<keyword id="KW-0479">Metal-binding</keyword>
<keyword id="KW-0597">Phosphoprotein</keyword>
<keyword id="KW-1185">Reference proteome</keyword>
<feature type="chain" id="PRO_0000301373" description="Phosphoglucosamine mutase">
    <location>
        <begin position="1"/>
        <end position="449"/>
    </location>
</feature>
<feature type="active site" description="Phosphoserine intermediate" evidence="1">
    <location>
        <position position="102"/>
    </location>
</feature>
<feature type="binding site" description="via phosphate group" evidence="1">
    <location>
        <position position="102"/>
    </location>
    <ligand>
        <name>Mg(2+)</name>
        <dbReference type="ChEBI" id="CHEBI:18420"/>
    </ligand>
</feature>
<feature type="binding site" evidence="1">
    <location>
        <position position="241"/>
    </location>
    <ligand>
        <name>Mg(2+)</name>
        <dbReference type="ChEBI" id="CHEBI:18420"/>
    </ligand>
</feature>
<feature type="binding site" evidence="1">
    <location>
        <position position="243"/>
    </location>
    <ligand>
        <name>Mg(2+)</name>
        <dbReference type="ChEBI" id="CHEBI:18420"/>
    </ligand>
</feature>
<feature type="binding site" evidence="1">
    <location>
        <position position="245"/>
    </location>
    <ligand>
        <name>Mg(2+)</name>
        <dbReference type="ChEBI" id="CHEBI:18420"/>
    </ligand>
</feature>
<feature type="modified residue" description="Phosphoserine" evidence="1">
    <location>
        <position position="102"/>
    </location>
</feature>
<comment type="function">
    <text evidence="1">Catalyzes the conversion of glucosamine-6-phosphate to glucosamine-1-phosphate.</text>
</comment>
<comment type="catalytic activity">
    <reaction evidence="1">
        <text>alpha-D-glucosamine 1-phosphate = D-glucosamine 6-phosphate</text>
        <dbReference type="Rhea" id="RHEA:23424"/>
        <dbReference type="ChEBI" id="CHEBI:58516"/>
        <dbReference type="ChEBI" id="CHEBI:58725"/>
        <dbReference type="EC" id="5.4.2.10"/>
    </reaction>
</comment>
<comment type="cofactor">
    <cofactor evidence="1">
        <name>Mg(2+)</name>
        <dbReference type="ChEBI" id="CHEBI:18420"/>
    </cofactor>
    <text evidence="1">Binds 1 Mg(2+) ion per subunit.</text>
</comment>
<comment type="PTM">
    <text evidence="1">Activated by phosphorylation.</text>
</comment>
<comment type="similarity">
    <text evidence="1">Belongs to the phosphohexose mutase family.</text>
</comment>
<gene>
    <name evidence="1" type="primary">glmM</name>
    <name type="ordered locus">RD1_1952</name>
</gene>